<protein>
    <recommendedName>
        <fullName>GDP-mannose pyrophosphatase</fullName>
        <ecNumber evidence="1">3.6.1.-</ecNumber>
    </recommendedName>
    <alternativeName>
        <fullName>GDP-mannose hydrolase</fullName>
    </alternativeName>
    <alternativeName>
        <fullName>GDPMK</fullName>
    </alternativeName>
</protein>
<accession>A9MHR4</accession>
<name>NUDK_SALAR</name>
<gene>
    <name type="primary">nudK</name>
    <name type="ordered locus">SARI_00406</name>
</gene>
<feature type="chain" id="PRO_0000342493" description="GDP-mannose pyrophosphatase">
    <location>
        <begin position="1"/>
        <end position="191"/>
    </location>
</feature>
<feature type="domain" description="Nudix hydrolase" evidence="2">
    <location>
        <begin position="43"/>
        <end position="180"/>
    </location>
</feature>
<feature type="short sequence motif" description="Nudix box">
    <location>
        <begin position="86"/>
        <end position="106"/>
    </location>
</feature>
<feature type="binding site" description="in other chain" evidence="1">
    <location>
        <position position="17"/>
    </location>
    <ligand>
        <name>GDP-alpha-D-mannose</name>
        <dbReference type="ChEBI" id="CHEBI:57527"/>
        <note>ligand shared between dimeric partners</note>
    </ligand>
</feature>
<feature type="binding site" evidence="1">
    <location>
        <begin position="38"/>
        <end position="40"/>
    </location>
    <ligand>
        <name>GDP-alpha-D-mannose</name>
        <dbReference type="ChEBI" id="CHEBI:57527"/>
        <note>ligand shared between dimeric partners</note>
    </ligand>
</feature>
<feature type="binding site" description="in other chain" evidence="1">
    <location>
        <position position="67"/>
    </location>
    <ligand>
        <name>GDP-alpha-D-mannose</name>
        <dbReference type="ChEBI" id="CHEBI:57527"/>
        <note>ligand shared between dimeric partners</note>
    </ligand>
</feature>
<feature type="binding site" description="in other chain" evidence="1">
    <location>
        <begin position="85"/>
        <end position="87"/>
    </location>
    <ligand>
        <name>GDP-alpha-D-mannose</name>
        <dbReference type="ChEBI" id="CHEBI:57527"/>
        <note>ligand shared between dimeric partners</note>
    </ligand>
</feature>
<feature type="binding site" evidence="1">
    <location>
        <position position="85"/>
    </location>
    <ligand>
        <name>Mg(2+)</name>
        <dbReference type="ChEBI" id="CHEBI:18420"/>
        <label>1</label>
    </ligand>
</feature>
<feature type="binding site" evidence="1">
    <location>
        <position position="100"/>
    </location>
    <ligand>
        <name>Mg(2+)</name>
        <dbReference type="ChEBI" id="CHEBI:18420"/>
        <label>2</label>
    </ligand>
</feature>
<feature type="binding site" description="in other chain" evidence="1">
    <location>
        <position position="104"/>
    </location>
    <ligand>
        <name>GDP-alpha-D-mannose</name>
        <dbReference type="ChEBI" id="CHEBI:57527"/>
        <note>ligand shared between dimeric partners</note>
    </ligand>
</feature>
<feature type="binding site" evidence="1">
    <location>
        <position position="104"/>
    </location>
    <ligand>
        <name>Mg(2+)</name>
        <dbReference type="ChEBI" id="CHEBI:18420"/>
        <label>1</label>
    </ligand>
</feature>
<feature type="binding site" evidence="1">
    <location>
        <position position="104"/>
    </location>
    <ligand>
        <name>Mg(2+)</name>
        <dbReference type="ChEBI" id="CHEBI:18420"/>
        <label>2</label>
    </ligand>
</feature>
<feature type="binding site" description="in other chain" evidence="1">
    <location>
        <position position="127"/>
    </location>
    <ligand>
        <name>GDP-alpha-D-mannose</name>
        <dbReference type="ChEBI" id="CHEBI:57527"/>
        <note>ligand shared between dimeric partners</note>
    </ligand>
</feature>
<feature type="binding site" description="in other chain" evidence="1">
    <location>
        <begin position="150"/>
        <end position="151"/>
    </location>
    <ligand>
        <name>GDP-alpha-D-mannose</name>
        <dbReference type="ChEBI" id="CHEBI:57527"/>
        <note>ligand shared between dimeric partners</note>
    </ligand>
</feature>
<feature type="binding site" evidence="1">
    <location>
        <position position="151"/>
    </location>
    <ligand>
        <name>Mg(2+)</name>
        <dbReference type="ChEBI" id="CHEBI:18420"/>
        <label>2</label>
    </ligand>
</feature>
<feature type="binding site" description="in other chain" evidence="1">
    <location>
        <position position="176"/>
    </location>
    <ligand>
        <name>GDP-alpha-D-mannose</name>
        <dbReference type="ChEBI" id="CHEBI:57527"/>
        <note>ligand shared between dimeric partners</note>
    </ligand>
</feature>
<organism>
    <name type="scientific">Salmonella arizonae (strain ATCC BAA-731 / CDC346-86 / RSK2980)</name>
    <dbReference type="NCBI Taxonomy" id="41514"/>
    <lineage>
        <taxon>Bacteria</taxon>
        <taxon>Pseudomonadati</taxon>
        <taxon>Pseudomonadota</taxon>
        <taxon>Gammaproteobacteria</taxon>
        <taxon>Enterobacterales</taxon>
        <taxon>Enterobacteriaceae</taxon>
        <taxon>Salmonella</taxon>
    </lineage>
</organism>
<proteinExistence type="inferred from homology"/>
<reference key="1">
    <citation type="submission" date="2007-11" db="EMBL/GenBank/DDBJ databases">
        <authorList>
            <consortium name="The Salmonella enterica serovar Arizonae Genome Sequencing Project"/>
            <person name="McClelland M."/>
            <person name="Sanderson E.K."/>
            <person name="Porwollik S."/>
            <person name="Spieth J."/>
            <person name="Clifton W.S."/>
            <person name="Fulton R."/>
            <person name="Chunyan W."/>
            <person name="Wollam A."/>
            <person name="Shah N."/>
            <person name="Pepin K."/>
            <person name="Bhonagiri V."/>
            <person name="Nash W."/>
            <person name="Johnson M."/>
            <person name="Thiruvilangam P."/>
            <person name="Wilson R."/>
        </authorList>
    </citation>
    <scope>NUCLEOTIDE SEQUENCE [LARGE SCALE GENOMIC DNA]</scope>
    <source>
        <strain>ATCC BAA-731 / CDC346-86 / RSK2980</strain>
    </source>
</reference>
<evidence type="ECO:0000250" key="1">
    <source>
        <dbReference type="UniProtKB" id="P37128"/>
    </source>
</evidence>
<evidence type="ECO:0000255" key="2">
    <source>
        <dbReference type="PROSITE-ProRule" id="PRU00794"/>
    </source>
</evidence>
<evidence type="ECO:0000305" key="3"/>
<comment type="function">
    <text evidence="1">Nucleoside diphosphate sugar hydrolase that hydrolyzes GDP-mannose as its preferred substrate, yielding GMP and mannose-1-phosphate.</text>
</comment>
<comment type="catalytic activity">
    <reaction evidence="1">
        <text>GDP-alpha-D-mannose + H2O = alpha-D-mannose 1-phosphate + GMP + 2 H(+)</text>
        <dbReference type="Rhea" id="RHEA:27978"/>
        <dbReference type="ChEBI" id="CHEBI:15377"/>
        <dbReference type="ChEBI" id="CHEBI:15378"/>
        <dbReference type="ChEBI" id="CHEBI:57527"/>
        <dbReference type="ChEBI" id="CHEBI:58115"/>
        <dbReference type="ChEBI" id="CHEBI:58409"/>
    </reaction>
</comment>
<comment type="cofactor">
    <cofactor evidence="1">
        <name>Mg(2+)</name>
        <dbReference type="ChEBI" id="CHEBI:18420"/>
    </cofactor>
</comment>
<comment type="subunit">
    <text evidence="1">Homodimer.</text>
</comment>
<comment type="domain">
    <text evidence="1">In the dimer, the N-terminal domains are swapped between the two monomers, such that residues of both chains contribute to the active site.</text>
</comment>
<comment type="similarity">
    <text evidence="3">Belongs to the Nudix hydrolase family. NudK subfamily.</text>
</comment>
<comment type="sequence caution" evidence="3">
    <conflict type="erroneous initiation">
        <sequence resource="EMBL-CDS" id="ABX20342"/>
    </conflict>
</comment>
<sequence>MSQNITLIKDKILSDNYFTLRNITYDLTRRNGKVIRHKREVYDRGNGATILLYNSTKKTVVLVRQFRVATWVNGNEDGMLIETCAGLLDNDEPEVCIRKEAIEETGYDVGEVRKIFELYMSPGGVTELIHFFIAEYRDSERASTGGGVEDEDIEVLELPFSRALEMARSGEIRDGKTVLLLNYLHMSHLMG</sequence>
<dbReference type="EC" id="3.6.1.-" evidence="1"/>
<dbReference type="EMBL" id="CP000880">
    <property type="protein sequence ID" value="ABX20342.1"/>
    <property type="status" value="ALT_INIT"/>
    <property type="molecule type" value="Genomic_DNA"/>
</dbReference>
<dbReference type="SMR" id="A9MHR4"/>
<dbReference type="STRING" id="41514.SARI_00406"/>
<dbReference type="KEGG" id="ses:SARI_00406"/>
<dbReference type="HOGENOM" id="CLU_062658_6_0_6"/>
<dbReference type="Proteomes" id="UP000002084">
    <property type="component" value="Chromosome"/>
</dbReference>
<dbReference type="GO" id="GO:0005829">
    <property type="term" value="C:cytosol"/>
    <property type="evidence" value="ECO:0007669"/>
    <property type="project" value="TreeGrafter"/>
</dbReference>
<dbReference type="GO" id="GO:0016818">
    <property type="term" value="F:hydrolase activity, acting on acid anhydrides, in phosphorus-containing anhydrides"/>
    <property type="evidence" value="ECO:0007669"/>
    <property type="project" value="InterPro"/>
</dbReference>
<dbReference type="GO" id="GO:0046872">
    <property type="term" value="F:metal ion binding"/>
    <property type="evidence" value="ECO:0007669"/>
    <property type="project" value="UniProtKB-KW"/>
</dbReference>
<dbReference type="GO" id="GO:0006753">
    <property type="term" value="P:nucleoside phosphate metabolic process"/>
    <property type="evidence" value="ECO:0007669"/>
    <property type="project" value="TreeGrafter"/>
</dbReference>
<dbReference type="GO" id="GO:0019693">
    <property type="term" value="P:ribose phosphate metabolic process"/>
    <property type="evidence" value="ECO:0007669"/>
    <property type="project" value="TreeGrafter"/>
</dbReference>
<dbReference type="CDD" id="cd24157">
    <property type="entry name" value="NUDIX_GDPMK"/>
    <property type="match status" value="1"/>
</dbReference>
<dbReference type="FunFam" id="3.90.79.10:FF:000010">
    <property type="entry name" value="GDP-mannose pyrophosphatase NudK"/>
    <property type="match status" value="1"/>
</dbReference>
<dbReference type="Gene3D" id="3.90.79.10">
    <property type="entry name" value="Nucleoside Triphosphate Pyrophosphohydrolase"/>
    <property type="match status" value="1"/>
</dbReference>
<dbReference type="InterPro" id="IPR004385">
    <property type="entry name" value="NDP_pyrophosphatase"/>
</dbReference>
<dbReference type="InterPro" id="IPR015797">
    <property type="entry name" value="NUDIX_hydrolase-like_dom_sf"/>
</dbReference>
<dbReference type="InterPro" id="IPR000086">
    <property type="entry name" value="NUDIX_hydrolase_dom"/>
</dbReference>
<dbReference type="NCBIfam" id="TIGR00052">
    <property type="entry name" value="nudix-type nucleoside diphosphatase, YffH/AdpP family"/>
    <property type="match status" value="1"/>
</dbReference>
<dbReference type="NCBIfam" id="NF011585">
    <property type="entry name" value="PRK15009.1"/>
    <property type="match status" value="1"/>
</dbReference>
<dbReference type="PANTHER" id="PTHR11839:SF18">
    <property type="entry name" value="NUDIX HYDROLASE DOMAIN-CONTAINING PROTEIN"/>
    <property type="match status" value="1"/>
</dbReference>
<dbReference type="PANTHER" id="PTHR11839">
    <property type="entry name" value="UDP/ADP-SUGAR PYROPHOSPHATASE"/>
    <property type="match status" value="1"/>
</dbReference>
<dbReference type="Pfam" id="PF00293">
    <property type="entry name" value="NUDIX"/>
    <property type="match status" value="1"/>
</dbReference>
<dbReference type="SUPFAM" id="SSF55811">
    <property type="entry name" value="Nudix"/>
    <property type="match status" value="1"/>
</dbReference>
<dbReference type="PROSITE" id="PS51462">
    <property type="entry name" value="NUDIX"/>
    <property type="match status" value="1"/>
</dbReference>
<keyword id="KW-0378">Hydrolase</keyword>
<keyword id="KW-0460">Magnesium</keyword>
<keyword id="KW-0479">Metal-binding</keyword>
<keyword id="KW-1185">Reference proteome</keyword>